<reference key="1">
    <citation type="submission" date="2007-02" db="EMBL/GenBank/DDBJ databases">
        <title>Complete sequence of Mycobacterium sp. JLS.</title>
        <authorList>
            <consortium name="US DOE Joint Genome Institute"/>
            <person name="Copeland A."/>
            <person name="Lucas S."/>
            <person name="Lapidus A."/>
            <person name="Barry K."/>
            <person name="Detter J.C."/>
            <person name="Glavina del Rio T."/>
            <person name="Hammon N."/>
            <person name="Israni S."/>
            <person name="Dalin E."/>
            <person name="Tice H."/>
            <person name="Pitluck S."/>
            <person name="Chain P."/>
            <person name="Malfatti S."/>
            <person name="Shin M."/>
            <person name="Vergez L."/>
            <person name="Schmutz J."/>
            <person name="Larimer F."/>
            <person name="Land M."/>
            <person name="Hauser L."/>
            <person name="Kyrpides N."/>
            <person name="Mikhailova N."/>
            <person name="Miller C.D."/>
            <person name="Anderson A.J."/>
            <person name="Sims R.C."/>
            <person name="Richardson P."/>
        </authorList>
    </citation>
    <scope>NUCLEOTIDE SEQUENCE [LARGE SCALE GENOMIC DNA]</scope>
    <source>
        <strain>JLS</strain>
    </source>
</reference>
<feature type="chain" id="PRO_0000383268" description="Nucleotide-binding protein Mjls_2437">
    <location>
        <begin position="1"/>
        <end position="305"/>
    </location>
</feature>
<feature type="binding site" evidence="1">
    <location>
        <begin position="28"/>
        <end position="35"/>
    </location>
    <ligand>
        <name>ATP</name>
        <dbReference type="ChEBI" id="CHEBI:30616"/>
    </ligand>
</feature>
<feature type="binding site" evidence="1">
    <location>
        <begin position="79"/>
        <end position="82"/>
    </location>
    <ligand>
        <name>GTP</name>
        <dbReference type="ChEBI" id="CHEBI:37565"/>
    </ligand>
</feature>
<accession>A3PZ94</accession>
<proteinExistence type="inferred from homology"/>
<name>Y2437_MYCSJ</name>
<dbReference type="EMBL" id="CP000580">
    <property type="protein sequence ID" value="ABN98221.1"/>
    <property type="molecule type" value="Genomic_DNA"/>
</dbReference>
<dbReference type="SMR" id="A3PZ94"/>
<dbReference type="KEGG" id="mjl:Mjls_2437"/>
<dbReference type="HOGENOM" id="CLU_059558_0_0_11"/>
<dbReference type="BioCyc" id="MSP164757:G1G8C-2456-MONOMER"/>
<dbReference type="GO" id="GO:0005524">
    <property type="term" value="F:ATP binding"/>
    <property type="evidence" value="ECO:0007669"/>
    <property type="project" value="UniProtKB-UniRule"/>
</dbReference>
<dbReference type="GO" id="GO:0005525">
    <property type="term" value="F:GTP binding"/>
    <property type="evidence" value="ECO:0007669"/>
    <property type="project" value="UniProtKB-UniRule"/>
</dbReference>
<dbReference type="Gene3D" id="3.40.50.300">
    <property type="entry name" value="P-loop containing nucleotide triphosphate hydrolases"/>
    <property type="match status" value="1"/>
</dbReference>
<dbReference type="HAMAP" id="MF_00636">
    <property type="entry name" value="RapZ_like"/>
    <property type="match status" value="1"/>
</dbReference>
<dbReference type="InterPro" id="IPR027417">
    <property type="entry name" value="P-loop_NTPase"/>
</dbReference>
<dbReference type="InterPro" id="IPR005337">
    <property type="entry name" value="RapZ-like"/>
</dbReference>
<dbReference type="InterPro" id="IPR053930">
    <property type="entry name" value="RapZ-like_N"/>
</dbReference>
<dbReference type="InterPro" id="IPR053931">
    <property type="entry name" value="RapZ_C"/>
</dbReference>
<dbReference type="NCBIfam" id="NF003828">
    <property type="entry name" value="PRK05416.1"/>
    <property type="match status" value="1"/>
</dbReference>
<dbReference type="PANTHER" id="PTHR30448">
    <property type="entry name" value="RNASE ADAPTER PROTEIN RAPZ"/>
    <property type="match status" value="1"/>
</dbReference>
<dbReference type="PANTHER" id="PTHR30448:SF0">
    <property type="entry name" value="RNASE ADAPTER PROTEIN RAPZ"/>
    <property type="match status" value="1"/>
</dbReference>
<dbReference type="Pfam" id="PF22740">
    <property type="entry name" value="PapZ_C"/>
    <property type="match status" value="1"/>
</dbReference>
<dbReference type="Pfam" id="PF03668">
    <property type="entry name" value="RapZ-like_N"/>
    <property type="match status" value="1"/>
</dbReference>
<dbReference type="PIRSF" id="PIRSF005052">
    <property type="entry name" value="P-loopkin"/>
    <property type="match status" value="1"/>
</dbReference>
<dbReference type="SUPFAM" id="SSF52540">
    <property type="entry name" value="P-loop containing nucleoside triphosphate hydrolases"/>
    <property type="match status" value="1"/>
</dbReference>
<comment type="function">
    <text evidence="1">Displays ATPase and GTPase activities.</text>
</comment>
<comment type="similarity">
    <text evidence="1">Belongs to the RapZ-like family.</text>
</comment>
<sequence length="305" mass="33587">MTESDMSEQLRGDVDHPESGIDVVLVTGLSGAGRGTAAKVLEDLGWYVADNLPPELIARMVELGLAAGSRITQLAVVMDVRSRGFTGDLDWVRRDLATRNITPRVLFLEASDDILVRRYEQNRRSHPLQGDQTLAEGIARERALLAPVRASADLVIDTSKLSVHALRESVERAFGGEVVAETSATVESFGYKYGLPMDADIVMDVRFLPNPHWVDALRPHTGQHPDVRDYVLGQPGAEEFLDTYHRLLNVVIDGYRREGKRYMTVAIGCTGGKHRSVAIAEALAGRLQGGDELTVRVLHRDLGRE</sequence>
<protein>
    <recommendedName>
        <fullName evidence="1">Nucleotide-binding protein Mjls_2437</fullName>
    </recommendedName>
</protein>
<gene>
    <name type="ordered locus">Mjls_2437</name>
</gene>
<organism>
    <name type="scientific">Mycobacterium sp. (strain JLS)</name>
    <dbReference type="NCBI Taxonomy" id="164757"/>
    <lineage>
        <taxon>Bacteria</taxon>
        <taxon>Bacillati</taxon>
        <taxon>Actinomycetota</taxon>
        <taxon>Actinomycetes</taxon>
        <taxon>Mycobacteriales</taxon>
        <taxon>Mycobacteriaceae</taxon>
        <taxon>Mycobacterium</taxon>
    </lineage>
</organism>
<evidence type="ECO:0000255" key="1">
    <source>
        <dbReference type="HAMAP-Rule" id="MF_00636"/>
    </source>
</evidence>
<keyword id="KW-0067">ATP-binding</keyword>
<keyword id="KW-0342">GTP-binding</keyword>
<keyword id="KW-0547">Nucleotide-binding</keyword>